<accession>B3VZU6</accession>
<dbReference type="EMBL" id="EU827806">
    <property type="protein sequence ID" value="ACF08006.1"/>
    <property type="molecule type" value="mRNA"/>
</dbReference>
<dbReference type="GO" id="GO:0005576">
    <property type="term" value="C:extracellular region"/>
    <property type="evidence" value="ECO:0000314"/>
    <property type="project" value="UniProtKB"/>
</dbReference>
<dbReference type="GO" id="GO:0050830">
    <property type="term" value="P:defense response to Gram-positive bacterium"/>
    <property type="evidence" value="ECO:0000314"/>
    <property type="project" value="UniProtKB"/>
</dbReference>
<dbReference type="GO" id="GO:0051001">
    <property type="term" value="P:negative regulation of nitric-oxide synthase activity"/>
    <property type="evidence" value="ECO:0000314"/>
    <property type="project" value="UniProtKB"/>
</dbReference>
<dbReference type="InterPro" id="IPR004275">
    <property type="entry name" value="Frog_antimicrobial_propeptide"/>
</dbReference>
<dbReference type="Pfam" id="PF03032">
    <property type="entry name" value="FSAP_sig_propep"/>
    <property type="match status" value="1"/>
</dbReference>
<proteinExistence type="evidence at transcript level"/>
<organism>
    <name type="scientific">Rana dybowskii</name>
    <name type="common">Dybovsky's frog</name>
    <name type="synonym">Korean brown frog</name>
    <dbReference type="NCBI Taxonomy" id="71582"/>
    <lineage>
        <taxon>Eukaryota</taxon>
        <taxon>Metazoa</taxon>
        <taxon>Chordata</taxon>
        <taxon>Craniata</taxon>
        <taxon>Vertebrata</taxon>
        <taxon>Euteleostomi</taxon>
        <taxon>Amphibia</taxon>
        <taxon>Batrachia</taxon>
        <taxon>Anura</taxon>
        <taxon>Neobatrachia</taxon>
        <taxon>Ranoidea</taxon>
        <taxon>Ranidae</taxon>
        <taxon>Rana</taxon>
        <taxon>Rana</taxon>
    </lineage>
</organism>
<sequence length="59" mass="6519">MFTLKKSMLLLLFLGTISLTLCEEERDANEEEENGGEVKVEEKRFIGPIISALASLFGG</sequence>
<name>TPCE_RANDY</name>
<protein>
    <recommendedName>
        <fullName evidence="4 6">Temporin-CDYe</fullName>
    </recommendedName>
</protein>
<evidence type="ECO:0000250" key="1">
    <source>
        <dbReference type="UniProtKB" id="P79874"/>
    </source>
</evidence>
<evidence type="ECO:0000255" key="2"/>
<evidence type="ECO:0000269" key="3">
    <source>
    </source>
</evidence>
<evidence type="ECO:0000303" key="4">
    <source>
    </source>
</evidence>
<evidence type="ECO:0000305" key="5"/>
<evidence type="ECO:0000312" key="6">
    <source>
        <dbReference type="EMBL" id="ACF08006.1"/>
    </source>
</evidence>
<keyword id="KW-0878">Amphibian defense peptide</keyword>
<keyword id="KW-0044">Antibiotic</keyword>
<keyword id="KW-0929">Antimicrobial</keyword>
<keyword id="KW-0165">Cleavage on pair of basic residues</keyword>
<keyword id="KW-0964">Secreted</keyword>
<keyword id="KW-0732">Signal</keyword>
<feature type="signal peptide" evidence="2 6">
    <location>
        <begin position="1"/>
        <end position="22"/>
    </location>
</feature>
<feature type="propeptide" id="PRO_0000391435" evidence="1">
    <location>
        <begin position="23"/>
        <end position="42"/>
    </location>
</feature>
<feature type="peptide" id="PRO_5000381487" description="Temporin-CDYe" evidence="3">
    <location>
        <begin position="45"/>
        <end position="59"/>
    </location>
</feature>
<comment type="function">
    <text evidence="1">Antimicrobial peptide.</text>
</comment>
<comment type="subcellular location">
    <subcellularLocation>
        <location evidence="1">Secreted</location>
    </subcellularLocation>
</comment>
<comment type="tissue specificity">
    <text evidence="3">Expressed by the skin glands.</text>
</comment>
<comment type="similarity">
    <text evidence="2">Belongs to the frog skin active peptide (FSAP) family. Temporin subfamily.</text>
</comment>
<reference evidence="5 6" key="1">
    <citation type="journal article" date="2009" name="Comp. Biochem. Physiol.">
        <title>Characterization of antimicrobial peptides isolated from the skin of the Chinese frog, Rana dybowskii.</title>
        <authorList>
            <person name="Jin L.-L."/>
            <person name="Li Q."/>
            <person name="Song S.-S."/>
            <person name="Feng K."/>
            <person name="Zhang D.-B."/>
            <person name="Wang Q.-Y."/>
            <person name="Chen Y.-H."/>
        </authorList>
    </citation>
    <scope>NUCLEOTIDE SEQUENCE [MRNA]</scope>
    <scope>TISSUE SPECIFICITY</scope>
    <source>
        <tissue evidence="6">Skin</tissue>
    </source>
</reference>